<sequence>STKKAVPEAKAALNQMKLEIANELGLSNYESVDKGNLTARQNGYVGGYMTKKLVEMAERQMSGK</sequence>
<comment type="function">
    <text>SASP are bound to spore DNA. They are double-stranded DNA-binding proteins that cause DNA to change to an a-like conformation. They protect the DNA backbone from chemical and enzymatic cleavage and are thus involved in dormant spore's high resistance to UV light.</text>
</comment>
<comment type="miscellaneous">
    <text>SASP are degraded in the first minutes of spore germination and provide amino acids for both new protein synthesis and metabolism.</text>
</comment>
<comment type="similarity">
    <text evidence="1">Belongs to the alpha/beta-type SASP family.</text>
</comment>
<accession>P22066</accession>
<protein>
    <recommendedName>
        <fullName>Small, acid-soluble spore protein beta</fullName>
        <shortName>ASSP</shortName>
        <shortName>SASP</shortName>
    </recommendedName>
</protein>
<name>SAS2_PARBF</name>
<reference key="1">
    <citation type="journal article" date="1989" name="FEMS Microbiol. Lett.">
        <title>Purification and amino acid sequence of two small, acid-soluble proteins from Clostridium bifermentans spores.</title>
        <authorList>
            <person name="Cabrera-Martinez R.M."/>
            <person name="Mason J.M."/>
            <person name="Setlow B."/>
            <person name="Waites W.M."/>
            <person name="Setlow P."/>
        </authorList>
    </citation>
    <scope>PROTEIN SEQUENCE</scope>
</reference>
<proteinExistence type="evidence at protein level"/>
<organism>
    <name type="scientific">Paraclostridium bifermentans</name>
    <name type="common">Clostridium bifermentans</name>
    <dbReference type="NCBI Taxonomy" id="1490"/>
    <lineage>
        <taxon>Bacteria</taxon>
        <taxon>Bacillati</taxon>
        <taxon>Bacillota</taxon>
        <taxon>Clostridia</taxon>
        <taxon>Peptostreptococcales</taxon>
        <taxon>Peptostreptococcaceae</taxon>
        <taxon>Paraclostridium</taxon>
    </lineage>
</organism>
<dbReference type="PIR" id="B61028">
    <property type="entry name" value="B61028"/>
</dbReference>
<dbReference type="SMR" id="P22066"/>
<dbReference type="STRING" id="1490.B2H97_10690"/>
<dbReference type="GO" id="GO:0003690">
    <property type="term" value="F:double-stranded DNA binding"/>
    <property type="evidence" value="ECO:0007669"/>
    <property type="project" value="InterPro"/>
</dbReference>
<dbReference type="GO" id="GO:0006265">
    <property type="term" value="P:DNA topological change"/>
    <property type="evidence" value="ECO:0007669"/>
    <property type="project" value="InterPro"/>
</dbReference>
<dbReference type="GO" id="GO:0030435">
    <property type="term" value="P:sporulation resulting in formation of a cellular spore"/>
    <property type="evidence" value="ECO:0007669"/>
    <property type="project" value="UniProtKB-KW"/>
</dbReference>
<dbReference type="Gene3D" id="6.10.10.80">
    <property type="entry name" value="Small, acid-soluble spore protein, alpha/beta type-like"/>
    <property type="match status" value="1"/>
</dbReference>
<dbReference type="InterPro" id="IPR001448">
    <property type="entry name" value="SASP_alpha/beta-type"/>
</dbReference>
<dbReference type="InterPro" id="IPR018126">
    <property type="entry name" value="SASP_alpha/beta-type_CS"/>
</dbReference>
<dbReference type="InterPro" id="IPR050847">
    <property type="entry name" value="SASP_DNA-binding"/>
</dbReference>
<dbReference type="InterPro" id="IPR038300">
    <property type="entry name" value="SASP_sf_alpha/beta"/>
</dbReference>
<dbReference type="PANTHER" id="PTHR36107">
    <property type="entry name" value="SMALL, ACID-SOLUBLE SPORE PROTEIN A"/>
    <property type="match status" value="1"/>
</dbReference>
<dbReference type="PANTHER" id="PTHR36107:SF1">
    <property type="entry name" value="SMALL, ACID-SOLUBLE SPORE PROTEIN A"/>
    <property type="match status" value="1"/>
</dbReference>
<dbReference type="Pfam" id="PF00269">
    <property type="entry name" value="SASP"/>
    <property type="match status" value="1"/>
</dbReference>
<dbReference type="PROSITE" id="PS00304">
    <property type="entry name" value="SASP_1"/>
    <property type="match status" value="1"/>
</dbReference>
<dbReference type="PROSITE" id="PS00684">
    <property type="entry name" value="SASP_2"/>
    <property type="match status" value="1"/>
</dbReference>
<evidence type="ECO:0000305" key="1"/>
<keyword id="KW-0903">Direct protein sequencing</keyword>
<keyword id="KW-0238">DNA-binding</keyword>
<keyword id="KW-0749">Sporulation</keyword>
<feature type="chain" id="PRO_0000196310" description="Small, acid-soluble spore protein beta">
    <location>
        <begin position="1"/>
        <end position="64"/>
    </location>
</feature>
<feature type="site" description="Cleavage; by spore protease">
    <location>
        <begin position="19"/>
        <end position="20"/>
    </location>
</feature>